<evidence type="ECO:0000250" key="1">
    <source>
        <dbReference type="UniProtKB" id="Q9PRS8"/>
    </source>
</evidence>
<evidence type="ECO:0000255" key="2">
    <source>
        <dbReference type="PROSITE-ProRule" id="PRU00040"/>
    </source>
</evidence>
<evidence type="ECO:0000269" key="3">
    <source>
    </source>
</evidence>
<evidence type="ECO:0000269" key="4">
    <source>
    </source>
</evidence>
<evidence type="ECO:0000305" key="5"/>
<accession>P84616</accession>
<protein>
    <recommendedName>
        <fullName>Dromaiocalcin-2</fullName>
        <shortName>DCA-2</shortName>
    </recommendedName>
</protein>
<feature type="chain" id="PRO_0000046717" description="Dromaiocalcin-2">
    <location>
        <begin position="1"/>
        <end position="142"/>
    </location>
</feature>
<feature type="domain" description="C-type lectin" evidence="2">
    <location>
        <begin position="13"/>
        <end position="139"/>
    </location>
</feature>
<feature type="modified residue" description="Phosphoserine" evidence="4">
    <location>
        <position position="62"/>
    </location>
</feature>
<feature type="modified residue" description="Phosphoserine" evidence="4">
    <location>
        <position position="68"/>
    </location>
</feature>
<feature type="disulfide bond" evidence="1 2">
    <location>
        <begin position="6"/>
        <end position="17"/>
    </location>
</feature>
<feature type="disulfide bond" evidence="1 2">
    <location>
        <begin position="34"/>
        <end position="138"/>
    </location>
</feature>
<feature type="disulfide bond" evidence="1 2">
    <location>
        <begin position="113"/>
        <end position="130"/>
    </location>
</feature>
<sequence length="142" mass="16490">EEEIGCTSGWVPFDGRCYGFFPQELSWRRAESFCQRLGARTHLVSIHNEEEHQAIISMLASSQPYSDSEEQEANGDVWIGLRLSLRRLWEWSDGTKLDYGSWYRDVLPRRRACAALEDTADFASWDVELCSDRKPFICAYRT</sequence>
<dbReference type="SMR" id="P84616"/>
<dbReference type="iPTMnet" id="P84616"/>
<dbReference type="Proteomes" id="UP000694423">
    <property type="component" value="Unplaced"/>
</dbReference>
<dbReference type="GO" id="GO:0005576">
    <property type="term" value="C:extracellular region"/>
    <property type="evidence" value="ECO:0007669"/>
    <property type="project" value="UniProtKB-KW"/>
</dbReference>
<dbReference type="GO" id="GO:0030246">
    <property type="term" value="F:carbohydrate binding"/>
    <property type="evidence" value="ECO:0007669"/>
    <property type="project" value="UniProtKB-KW"/>
</dbReference>
<dbReference type="CDD" id="cd03594">
    <property type="entry name" value="CLECT_REG-1_like"/>
    <property type="match status" value="1"/>
</dbReference>
<dbReference type="FunFam" id="3.10.100.10:FF:000087">
    <property type="entry name" value="Snaclec rhodocetin subunit delta"/>
    <property type="match status" value="1"/>
</dbReference>
<dbReference type="Gene3D" id="3.10.100.10">
    <property type="entry name" value="Mannose-Binding Protein A, subunit A"/>
    <property type="match status" value="1"/>
</dbReference>
<dbReference type="InterPro" id="IPR001304">
    <property type="entry name" value="C-type_lectin-like"/>
</dbReference>
<dbReference type="InterPro" id="IPR016186">
    <property type="entry name" value="C-type_lectin-like/link_sf"/>
</dbReference>
<dbReference type="InterPro" id="IPR050111">
    <property type="entry name" value="C-type_lectin/snaclec_domain"/>
</dbReference>
<dbReference type="InterPro" id="IPR016187">
    <property type="entry name" value="CTDL_fold"/>
</dbReference>
<dbReference type="PANTHER" id="PTHR22803">
    <property type="entry name" value="MANNOSE, PHOSPHOLIPASE, LECTIN RECEPTOR RELATED"/>
    <property type="match status" value="1"/>
</dbReference>
<dbReference type="Pfam" id="PF00059">
    <property type="entry name" value="Lectin_C"/>
    <property type="match status" value="1"/>
</dbReference>
<dbReference type="SMART" id="SM00034">
    <property type="entry name" value="CLECT"/>
    <property type="match status" value="1"/>
</dbReference>
<dbReference type="SUPFAM" id="SSF56436">
    <property type="entry name" value="C-type lectin-like"/>
    <property type="match status" value="1"/>
</dbReference>
<dbReference type="PROSITE" id="PS50041">
    <property type="entry name" value="C_TYPE_LECTIN_2"/>
    <property type="match status" value="1"/>
</dbReference>
<comment type="subcellular location">
    <subcellularLocation>
        <location>Secreted</location>
        <location>Extracellular space</location>
        <location>Extracellular matrix</location>
    </subcellularLocation>
    <text>Eggshell matrix.</text>
</comment>
<comment type="PTM">
    <text evidence="4">A minor form with some unmodified Ser-68 and partial phosphorylation of Ser-66 may also occur.</text>
</comment>
<comment type="mass spectrometry" mass="16645.6" method="Electrospray" evidence="4"/>
<name>DCAL2_DRONO</name>
<keyword id="KW-0903">Direct protein sequencing</keyword>
<keyword id="KW-1015">Disulfide bond</keyword>
<keyword id="KW-0272">Extracellular matrix</keyword>
<keyword id="KW-0430">Lectin</keyword>
<keyword id="KW-0597">Phosphoprotein</keyword>
<keyword id="KW-0964">Secreted</keyword>
<reference key="1">
    <citation type="journal article" date="2006" name="Comp. Biochem. Physiol.">
        <title>Amino acid sequences and phosphorylation sites of emu and rhea eggshell C-type lectin-like proteins.</title>
        <authorList>
            <person name="Mann K."/>
            <person name="Siedler F."/>
        </authorList>
    </citation>
    <scope>PROTEIN SEQUENCE</scope>
    <scope>MASS SPECTROMETRY</scope>
    <scope>PHOSPHORYLATION AT SER-62 AND SER-68</scope>
    <source>
        <tissue>Eggshell matrix</tissue>
    </source>
</reference>
<reference evidence="5" key="2">
    <citation type="journal article" date="2004" name="Br. Poult. Sci.">
        <title>Identification of the major proteins of the organic matrix of emu (Dromaius novaehollandiae) and rhea (Rhea americana) eggshell calcified layer.</title>
        <authorList>
            <person name="Mann K."/>
        </authorList>
    </citation>
    <scope>PROTEIN SEQUENCE OF 1-30</scope>
    <source>
        <tissue evidence="3">Eggshell matrix</tissue>
    </source>
</reference>
<proteinExistence type="evidence at protein level"/>
<organism>
    <name type="scientific">Dromaius novaehollandiae</name>
    <name type="common">Emu</name>
    <dbReference type="NCBI Taxonomy" id="8790"/>
    <lineage>
        <taxon>Eukaryota</taxon>
        <taxon>Metazoa</taxon>
        <taxon>Chordata</taxon>
        <taxon>Craniata</taxon>
        <taxon>Vertebrata</taxon>
        <taxon>Euteleostomi</taxon>
        <taxon>Archelosauria</taxon>
        <taxon>Archosauria</taxon>
        <taxon>Dinosauria</taxon>
        <taxon>Saurischia</taxon>
        <taxon>Theropoda</taxon>
        <taxon>Coelurosauria</taxon>
        <taxon>Aves</taxon>
        <taxon>Palaeognathae</taxon>
        <taxon>Casuariiformes</taxon>
        <taxon>Dromaiidae</taxon>
        <taxon>Dromaius</taxon>
    </lineage>
</organism>